<name>UNC80_MOUSE</name>
<feature type="chain" id="PRO_0000089349" description="Protein unc-80 homolog">
    <location>
        <begin position="1"/>
        <end position="3326"/>
    </location>
</feature>
<feature type="transmembrane region" description="Helical" evidence="2">
    <location>
        <begin position="2336"/>
        <end position="2356"/>
    </location>
</feature>
<feature type="transmembrane region" description="Helical" evidence="2">
    <location>
        <begin position="2466"/>
        <end position="2486"/>
    </location>
</feature>
<feature type="transmembrane region" description="Helical" evidence="2">
    <location>
        <begin position="2853"/>
        <end position="2873"/>
    </location>
</feature>
<feature type="transmembrane region" description="Helical" evidence="2">
    <location>
        <begin position="2899"/>
        <end position="2919"/>
    </location>
</feature>
<feature type="region of interest" description="Disordered" evidence="3">
    <location>
        <begin position="152"/>
        <end position="178"/>
    </location>
</feature>
<feature type="region of interest" description="Disordered" evidence="3">
    <location>
        <begin position="243"/>
        <end position="267"/>
    </location>
</feature>
<feature type="region of interest" description="Disordered" evidence="3">
    <location>
        <begin position="283"/>
        <end position="317"/>
    </location>
</feature>
<feature type="region of interest" description="Disordered" evidence="3">
    <location>
        <begin position="450"/>
        <end position="469"/>
    </location>
</feature>
<feature type="region of interest" description="Disordered" evidence="3">
    <location>
        <begin position="536"/>
        <end position="560"/>
    </location>
</feature>
<feature type="region of interest" description="Disordered" evidence="3">
    <location>
        <begin position="697"/>
        <end position="785"/>
    </location>
</feature>
<feature type="region of interest" description="Disordered" evidence="3">
    <location>
        <begin position="967"/>
        <end position="1076"/>
    </location>
</feature>
<feature type="region of interest" description="Disordered" evidence="3">
    <location>
        <begin position="1405"/>
        <end position="1430"/>
    </location>
</feature>
<feature type="region of interest" description="Disordered" evidence="3">
    <location>
        <begin position="1469"/>
        <end position="1516"/>
    </location>
</feature>
<feature type="region of interest" description="Disordered" evidence="3">
    <location>
        <begin position="2493"/>
        <end position="2515"/>
    </location>
</feature>
<feature type="region of interest" description="Disordered" evidence="3">
    <location>
        <begin position="3010"/>
        <end position="3052"/>
    </location>
</feature>
<feature type="region of interest" description="Disordered" evidence="3">
    <location>
        <begin position="3122"/>
        <end position="3222"/>
    </location>
</feature>
<feature type="region of interest" description="Disordered" evidence="3">
    <location>
        <begin position="3236"/>
        <end position="3271"/>
    </location>
</feature>
<feature type="region of interest" description="Disordered" evidence="3">
    <location>
        <begin position="3296"/>
        <end position="3326"/>
    </location>
</feature>
<feature type="compositionally biased region" description="Polar residues" evidence="3">
    <location>
        <begin position="152"/>
        <end position="164"/>
    </location>
</feature>
<feature type="compositionally biased region" description="Polar residues" evidence="3">
    <location>
        <begin position="283"/>
        <end position="308"/>
    </location>
</feature>
<feature type="compositionally biased region" description="Basic and acidic residues" evidence="3">
    <location>
        <begin position="551"/>
        <end position="560"/>
    </location>
</feature>
<feature type="compositionally biased region" description="Basic and acidic residues" evidence="3">
    <location>
        <begin position="699"/>
        <end position="713"/>
    </location>
</feature>
<feature type="compositionally biased region" description="Low complexity" evidence="3">
    <location>
        <begin position="723"/>
        <end position="737"/>
    </location>
</feature>
<feature type="compositionally biased region" description="Gly residues" evidence="3">
    <location>
        <begin position="738"/>
        <end position="770"/>
    </location>
</feature>
<feature type="compositionally biased region" description="Basic and acidic residues" evidence="3">
    <location>
        <begin position="772"/>
        <end position="783"/>
    </location>
</feature>
<feature type="compositionally biased region" description="Low complexity" evidence="3">
    <location>
        <begin position="1038"/>
        <end position="1055"/>
    </location>
</feature>
<feature type="compositionally biased region" description="Basic and acidic residues" evidence="3">
    <location>
        <begin position="1418"/>
        <end position="1429"/>
    </location>
</feature>
<feature type="compositionally biased region" description="Polar residues" evidence="3">
    <location>
        <begin position="3010"/>
        <end position="3032"/>
    </location>
</feature>
<feature type="compositionally biased region" description="Basic residues" evidence="3">
    <location>
        <begin position="3127"/>
        <end position="3136"/>
    </location>
</feature>
<feature type="compositionally biased region" description="Polar residues" evidence="3">
    <location>
        <begin position="3157"/>
        <end position="3168"/>
    </location>
</feature>
<feature type="compositionally biased region" description="Polar residues" evidence="3">
    <location>
        <begin position="3298"/>
        <end position="3309"/>
    </location>
</feature>
<feature type="compositionally biased region" description="Acidic residues" evidence="3">
    <location>
        <begin position="3315"/>
        <end position="3326"/>
    </location>
</feature>
<feature type="modified residue" description="Phosphoserine" evidence="11">
    <location>
        <position position="257"/>
    </location>
</feature>
<feature type="modified residue" description="Phosphoserine" evidence="11">
    <location>
        <position position="526"/>
    </location>
</feature>
<feature type="modified residue" description="Phosphoserine" evidence="11">
    <location>
        <position position="3110"/>
    </location>
</feature>
<feature type="splice variant" id="VSP_015007" description="In isoform 2." evidence="9">
    <original>GLQVVS</original>
    <variation>VSLLCL</variation>
    <location>
        <begin position="268"/>
        <end position="273"/>
    </location>
</feature>
<feature type="splice variant" id="VSP_015008" description="In isoform 2." evidence="9">
    <location>
        <begin position="274"/>
        <end position="3326"/>
    </location>
</feature>
<feature type="mutagenesis site" description="Partially restored current Na(+) leak current when expressed in UNC80 knockout neurons." evidence="8">
    <original>E</original>
    <variation>Q</variation>
    <location>
        <position position="1296"/>
    </location>
</feature>
<feature type="mutagenesis site" description="Does not affect interaction with NALCN. Does not affect interaction with UNC79. Affects NALCN channel activation." evidence="6">
    <original>P</original>
    <variation>S</variation>
    <location>
        <position position="1835"/>
    </location>
</feature>
<feature type="mutagenesis site" description="Leads to neonatal lethality in homozygote mice. Abolishes association of UNC79 with the NALCN complex. Affects subcellular location, retained in soma and absence in axons and dendrites." evidence="8">
    <location>
        <begin position="2654"/>
        <end position="3326"/>
    </location>
</feature>
<feature type="mutagenesis site" description="Decreases interaction with UNC79." evidence="8">
    <original>R</original>
    <variation>Q</variation>
    <location>
        <position position="2910"/>
    </location>
</feature>
<feature type="helix" evidence="12">
    <location>
        <begin position="22"/>
        <end position="34"/>
    </location>
</feature>
<feature type="helix" evidence="12">
    <location>
        <begin position="42"/>
        <end position="52"/>
    </location>
</feature>
<feature type="turn" evidence="12">
    <location>
        <begin position="53"/>
        <end position="56"/>
    </location>
</feature>
<feature type="helix" evidence="12">
    <location>
        <begin position="63"/>
        <end position="71"/>
    </location>
</feature>
<feature type="helix" evidence="12">
    <location>
        <begin position="74"/>
        <end position="94"/>
    </location>
</feature>
<feature type="helix" evidence="12">
    <location>
        <begin position="96"/>
        <end position="99"/>
    </location>
</feature>
<feature type="helix" evidence="12">
    <location>
        <begin position="107"/>
        <end position="121"/>
    </location>
</feature>
<feature type="helix" evidence="12">
    <location>
        <begin position="181"/>
        <end position="192"/>
    </location>
</feature>
<feature type="turn" evidence="12">
    <location>
        <begin position="201"/>
        <end position="203"/>
    </location>
</feature>
<feature type="helix" evidence="12">
    <location>
        <begin position="207"/>
        <end position="211"/>
    </location>
</feature>
<feature type="helix" evidence="12">
    <location>
        <begin position="212"/>
        <end position="215"/>
    </location>
</feature>
<feature type="helix" evidence="12">
    <location>
        <begin position="216"/>
        <end position="219"/>
    </location>
</feature>
<feature type="helix" evidence="12">
    <location>
        <begin position="331"/>
        <end position="339"/>
    </location>
</feature>
<feature type="helix" evidence="12">
    <location>
        <begin position="346"/>
        <end position="363"/>
    </location>
</feature>
<feature type="helix" evidence="12">
    <location>
        <begin position="656"/>
        <end position="665"/>
    </location>
</feature>
<feature type="helix" evidence="12">
    <location>
        <begin position="671"/>
        <end position="684"/>
    </location>
</feature>
<feature type="helix" evidence="12">
    <location>
        <begin position="788"/>
        <end position="802"/>
    </location>
</feature>
<feature type="helix" evidence="12">
    <location>
        <begin position="825"/>
        <end position="840"/>
    </location>
</feature>
<feature type="helix" evidence="12">
    <location>
        <begin position="842"/>
        <end position="855"/>
    </location>
</feature>
<feature type="turn" evidence="12">
    <location>
        <begin position="858"/>
        <end position="860"/>
    </location>
</feature>
<feature type="helix" evidence="12">
    <location>
        <begin position="861"/>
        <end position="869"/>
    </location>
</feature>
<feature type="helix" evidence="12">
    <location>
        <begin position="871"/>
        <end position="873"/>
    </location>
</feature>
<feature type="helix" evidence="12">
    <location>
        <begin position="899"/>
        <end position="917"/>
    </location>
</feature>
<feature type="helix" evidence="12">
    <location>
        <begin position="920"/>
        <end position="923"/>
    </location>
</feature>
<feature type="strand" evidence="12">
    <location>
        <begin position="924"/>
        <end position="926"/>
    </location>
</feature>
<feature type="helix" evidence="12">
    <location>
        <begin position="928"/>
        <end position="944"/>
    </location>
</feature>
<feature type="helix" evidence="12">
    <location>
        <begin position="947"/>
        <end position="953"/>
    </location>
</feature>
<feature type="helix" evidence="12">
    <location>
        <begin position="955"/>
        <end position="958"/>
    </location>
</feature>
<feature type="helix" evidence="12">
    <location>
        <begin position="1026"/>
        <end position="1037"/>
    </location>
</feature>
<feature type="helix" evidence="12">
    <location>
        <begin position="1178"/>
        <end position="1194"/>
    </location>
</feature>
<feature type="turn" evidence="12">
    <location>
        <begin position="1197"/>
        <end position="1199"/>
    </location>
</feature>
<feature type="helix" evidence="12">
    <location>
        <begin position="1203"/>
        <end position="1208"/>
    </location>
</feature>
<feature type="helix" evidence="12">
    <location>
        <begin position="1216"/>
        <end position="1234"/>
    </location>
</feature>
<feature type="turn" evidence="12">
    <location>
        <begin position="1240"/>
        <end position="1242"/>
    </location>
</feature>
<feature type="helix" evidence="12">
    <location>
        <begin position="1266"/>
        <end position="1293"/>
    </location>
</feature>
<feature type="helix" evidence="12">
    <location>
        <begin position="1312"/>
        <end position="1320"/>
    </location>
</feature>
<feature type="helix" evidence="12">
    <location>
        <begin position="1340"/>
        <end position="1357"/>
    </location>
</feature>
<feature type="turn" evidence="12">
    <location>
        <begin position="1358"/>
        <end position="1362"/>
    </location>
</feature>
<feature type="turn" evidence="12">
    <location>
        <begin position="1522"/>
        <end position="1524"/>
    </location>
</feature>
<feature type="helix" evidence="12">
    <location>
        <begin position="1529"/>
        <end position="1537"/>
    </location>
</feature>
<feature type="strand" evidence="12">
    <location>
        <begin position="1546"/>
        <end position="1548"/>
    </location>
</feature>
<feature type="helix" evidence="12">
    <location>
        <begin position="1554"/>
        <end position="1571"/>
    </location>
</feature>
<feature type="helix" evidence="12">
    <location>
        <begin position="1625"/>
        <end position="1633"/>
    </location>
</feature>
<feature type="helix" evidence="12">
    <location>
        <begin position="1640"/>
        <end position="1647"/>
    </location>
</feature>
<feature type="helix" evidence="12">
    <location>
        <begin position="1648"/>
        <end position="1651"/>
    </location>
</feature>
<feature type="helix" evidence="12">
    <location>
        <begin position="1654"/>
        <end position="1666"/>
    </location>
</feature>
<feature type="helix" evidence="12">
    <location>
        <begin position="1667"/>
        <end position="1669"/>
    </location>
</feature>
<feature type="helix" evidence="12">
    <location>
        <begin position="1673"/>
        <end position="1689"/>
    </location>
</feature>
<feature type="helix" evidence="12">
    <location>
        <begin position="1691"/>
        <end position="1702"/>
    </location>
</feature>
<feature type="helix" evidence="12">
    <location>
        <begin position="1707"/>
        <end position="1722"/>
    </location>
</feature>
<feature type="helix" evidence="12">
    <location>
        <begin position="1723"/>
        <end position="1725"/>
    </location>
</feature>
<feature type="helix" evidence="12">
    <location>
        <begin position="1728"/>
        <end position="1731"/>
    </location>
</feature>
<feature type="strand" evidence="12">
    <location>
        <begin position="1736"/>
        <end position="1739"/>
    </location>
</feature>
<feature type="helix" evidence="12">
    <location>
        <begin position="1804"/>
        <end position="1819"/>
    </location>
</feature>
<feature type="helix" evidence="12">
    <location>
        <begin position="1827"/>
        <end position="1830"/>
    </location>
</feature>
<feature type="helix" evidence="12">
    <location>
        <begin position="1913"/>
        <end position="1917"/>
    </location>
</feature>
<feature type="helix" evidence="12">
    <location>
        <begin position="1919"/>
        <end position="1925"/>
    </location>
</feature>
<feature type="helix" evidence="12">
    <location>
        <begin position="1938"/>
        <end position="1952"/>
    </location>
</feature>
<feature type="helix" evidence="12">
    <location>
        <begin position="1954"/>
        <end position="1967"/>
    </location>
</feature>
<feature type="helix" evidence="12">
    <location>
        <begin position="1971"/>
        <end position="1985"/>
    </location>
</feature>
<feature type="helix" evidence="12">
    <location>
        <begin position="1990"/>
        <end position="2009"/>
    </location>
</feature>
<feature type="helix" evidence="12">
    <location>
        <begin position="2015"/>
        <end position="2030"/>
    </location>
</feature>
<feature type="helix" evidence="12">
    <location>
        <begin position="2038"/>
        <end position="2048"/>
    </location>
</feature>
<feature type="helix" evidence="12">
    <location>
        <begin position="2051"/>
        <end position="2054"/>
    </location>
</feature>
<feature type="strand" evidence="12">
    <location>
        <begin position="2066"/>
        <end position="2069"/>
    </location>
</feature>
<feature type="strand" evidence="12">
    <location>
        <begin position="2078"/>
        <end position="2080"/>
    </location>
</feature>
<feature type="helix" evidence="12">
    <location>
        <begin position="2088"/>
        <end position="2098"/>
    </location>
</feature>
<feature type="strand" evidence="12">
    <location>
        <begin position="2106"/>
        <end position="2113"/>
    </location>
</feature>
<feature type="turn" evidence="12">
    <location>
        <begin position="2114"/>
        <end position="2117"/>
    </location>
</feature>
<feature type="helix" evidence="12">
    <location>
        <begin position="2126"/>
        <end position="2129"/>
    </location>
</feature>
<feature type="strand" evidence="12">
    <location>
        <begin position="2139"/>
        <end position="2144"/>
    </location>
</feature>
<feature type="helix" evidence="12">
    <location>
        <begin position="2147"/>
        <end position="2178"/>
    </location>
</feature>
<feature type="helix" evidence="12">
    <location>
        <begin position="2184"/>
        <end position="2197"/>
    </location>
</feature>
<feature type="helix" evidence="12">
    <location>
        <begin position="2201"/>
        <end position="2206"/>
    </location>
</feature>
<feature type="helix" evidence="12">
    <location>
        <begin position="2210"/>
        <end position="2213"/>
    </location>
</feature>
<feature type="strand" evidence="12">
    <location>
        <begin position="2216"/>
        <end position="2219"/>
    </location>
</feature>
<feature type="helix" evidence="12">
    <location>
        <begin position="2220"/>
        <end position="2241"/>
    </location>
</feature>
<feature type="helix" evidence="12">
    <location>
        <begin position="2253"/>
        <end position="2267"/>
    </location>
</feature>
<feature type="helix" evidence="12">
    <location>
        <begin position="2272"/>
        <end position="2288"/>
    </location>
</feature>
<feature type="helix" evidence="12">
    <location>
        <begin position="2290"/>
        <end position="2293"/>
    </location>
</feature>
<feature type="helix" evidence="12">
    <location>
        <begin position="2298"/>
        <end position="2311"/>
    </location>
</feature>
<feature type="turn" evidence="12">
    <location>
        <begin position="2312"/>
        <end position="2314"/>
    </location>
</feature>
<feature type="helix" evidence="12">
    <location>
        <begin position="2316"/>
        <end position="2332"/>
    </location>
</feature>
<feature type="helix" evidence="12">
    <location>
        <begin position="2335"/>
        <end position="2345"/>
    </location>
</feature>
<feature type="turn" evidence="12">
    <location>
        <begin position="2346"/>
        <end position="2348"/>
    </location>
</feature>
<feature type="helix" evidence="12">
    <location>
        <begin position="2365"/>
        <end position="2376"/>
    </location>
</feature>
<feature type="helix" evidence="12">
    <location>
        <begin position="2386"/>
        <end position="2388"/>
    </location>
</feature>
<feature type="strand" evidence="12">
    <location>
        <begin position="2398"/>
        <end position="2400"/>
    </location>
</feature>
<feature type="helix" evidence="12">
    <location>
        <begin position="2411"/>
        <end position="2424"/>
    </location>
</feature>
<feature type="helix" evidence="12">
    <location>
        <begin position="2429"/>
        <end position="2455"/>
    </location>
</feature>
<feature type="helix" evidence="12">
    <location>
        <begin position="2458"/>
        <end position="2481"/>
    </location>
</feature>
<feature type="helix" evidence="12">
    <location>
        <begin position="2547"/>
        <end position="2584"/>
    </location>
</feature>
<feature type="strand" evidence="12">
    <location>
        <begin position="2585"/>
        <end position="2587"/>
    </location>
</feature>
<feature type="helix" evidence="12">
    <location>
        <begin position="2599"/>
        <end position="2615"/>
    </location>
</feature>
<feature type="helix" evidence="12">
    <location>
        <begin position="2616"/>
        <end position="2618"/>
    </location>
</feature>
<feature type="helix" evidence="12">
    <location>
        <begin position="2620"/>
        <end position="2623"/>
    </location>
</feature>
<feature type="helix" evidence="12">
    <location>
        <begin position="2626"/>
        <end position="2634"/>
    </location>
</feature>
<feature type="turn" evidence="12">
    <location>
        <begin position="2635"/>
        <end position="2638"/>
    </location>
</feature>
<feature type="turn" evidence="12">
    <location>
        <begin position="2644"/>
        <end position="2646"/>
    </location>
</feature>
<feature type="helix" evidence="12">
    <location>
        <begin position="2647"/>
        <end position="2665"/>
    </location>
</feature>
<feature type="helix" evidence="12">
    <location>
        <begin position="2670"/>
        <end position="2673"/>
    </location>
</feature>
<feature type="helix" evidence="12">
    <location>
        <begin position="2676"/>
        <end position="2692"/>
    </location>
</feature>
<feature type="helix" evidence="12">
    <location>
        <begin position="2694"/>
        <end position="2698"/>
    </location>
</feature>
<feature type="helix" evidence="12">
    <location>
        <begin position="2700"/>
        <end position="2713"/>
    </location>
</feature>
<feature type="helix" evidence="12">
    <location>
        <begin position="2739"/>
        <end position="2755"/>
    </location>
</feature>
<feature type="turn" evidence="12">
    <location>
        <begin position="2757"/>
        <end position="2759"/>
    </location>
</feature>
<feature type="helix" evidence="12">
    <location>
        <begin position="2762"/>
        <end position="2766"/>
    </location>
</feature>
<feature type="helix" evidence="12">
    <location>
        <begin position="2767"/>
        <end position="2769"/>
    </location>
</feature>
<feature type="turn" evidence="12">
    <location>
        <begin position="2772"/>
        <end position="2774"/>
    </location>
</feature>
<feature type="helix" evidence="12">
    <location>
        <begin position="2775"/>
        <end position="2781"/>
    </location>
</feature>
<feature type="helix" evidence="12">
    <location>
        <begin position="2783"/>
        <end position="2791"/>
    </location>
</feature>
<feature type="helix" evidence="12">
    <location>
        <begin position="2802"/>
        <end position="2816"/>
    </location>
</feature>
<feature type="helix" evidence="12">
    <location>
        <begin position="2856"/>
        <end position="2872"/>
    </location>
</feature>
<feature type="helix" evidence="12">
    <location>
        <begin position="2874"/>
        <end position="2877"/>
    </location>
</feature>
<feature type="helix" evidence="12">
    <location>
        <begin position="2881"/>
        <end position="2894"/>
    </location>
</feature>
<feature type="strand" evidence="12">
    <location>
        <begin position="2896"/>
        <end position="2900"/>
    </location>
</feature>
<feature type="helix" evidence="12">
    <location>
        <begin position="2901"/>
        <end position="2911"/>
    </location>
</feature>
<feature type="helix" evidence="12">
    <location>
        <begin position="2914"/>
        <end position="2925"/>
    </location>
</feature>
<feature type="turn" evidence="12">
    <location>
        <begin position="2926"/>
        <end position="2929"/>
    </location>
</feature>
<feature type="helix" evidence="12">
    <location>
        <begin position="2935"/>
        <end position="2948"/>
    </location>
</feature>
<feature type="helix" evidence="12">
    <location>
        <begin position="2960"/>
        <end position="2978"/>
    </location>
</feature>
<protein>
    <recommendedName>
        <fullName>Protein unc-80 homolog</fullName>
        <shortName>mUNC-80</shortName>
    </recommendedName>
</protein>
<sequence length="3326" mass="370562">MVKRKSSEGQEQDGGRGIPLPIQTFLWRQTSAFLRPKLGKQYEASCVSFERVLVENKLHGLSPALSEAIQSISRWELVQAALPHVLHCTATLLSNRNKLGHQDKLGVAETKLLHTLHWMLLEAPQDCNNDQFGGTDRGSSWGGSSSAFIHQIENQGSPGQPCRSSSHDEEENNRRKTFQNSMATVELFVFLFAPLVHRIKESDLTFRLASGLVIWQPMWEHRQPEVSGFTALVKPIRNIITAKRSSPINSQSQTCESPNQDTRQQGEGLQVVSEALQSDSISPKATISGCHQGNSFDGSLSSQTSQERGPSHSRASLVIPPCQRSRYATYFDVAVLRCLLQPHWSEEGTQWSLMYYLQRLRHMLEEKPEKTPDPDIPLLPRPRSSSMVAAAPSLVNTHKTQDLTMKCNEEEKSLSPEAFSKVSLTNLRRSAVPDLSSDLGMNIFKKFKSRKEDRERKGSIPFHHTGKRRPRRMGVPFLLHEDHLDVSPTRSTFSFGSFSGLGEDRRGIEKGGWQTTILGKLTRRGSSDAATEMESLSARHSHSHHTLVSDLPDHSNSHGENTVKEVRSQISTITVATFNTTLASFNVGYADFFSEHMRKLCSQVPIPEMPHEPLACANLPRSLTDSCINYSYLEDTEHIDGTNNFVHKNGMLDLSVVLKAVYLVLNHDISSRICDVALNIVECLLQLGVVPCVEKNRKKSENKENESVEKRPSEGAFQFKGVSSSSTSGFGAPSASGAGDGGGEEGGGGDGGGGGGGGDGGGGGGGGGGPYEKNEKNQEKDDNIPVSNHRLALTMLIKIVKSLGCAYGCGEGHRGLSGDRLRHQVFRENAQNCLTKLYKLDKIQFRQTMRDYVNKDSLNNVVDFLHALLGFCMEPVTDNKAGFGNNFTTVDNKSTAQNVEGIIVGAMFKSLITRCASTTHELHSPENLGLYCDIRQLVQFIKEAHGNVFRRVALSALLDSAEKLAPGKKVEENGQESKPVGSKRSEAGSIADKGQVSSAPEECRSFMSGRPSQTPEHDEPMQGGNLGRKDFWRKMFKSQSAASDTSSQSEQDTSECTTAHSGNTSDRRARSRSRRISLRKKLKLPIGNWLKRSSLSGLADGVEDLLDISSVDRLSFIRQSSKVKFTSAVKLSEGGPGSGMENGREEEENFFKRLGCHSFDDHLSPNQDGGKSKNVVNLGAIRQGMKRFQFLLNCCEPGTIPDASILAAALDLEAPVVARAALFLECARFVHRCNRGNWPEWMKGHHVNITKKGLSRGRSPTVGNKRNQKLQWSAAKLFYQWGDAIGIRLNELCHGESESPANLLGLIYDEETKRRLRKEDEEEDFLDDSTVNPSKCGCPFALKMAACQLLLEITTFLRETFSCLPRPRTEPLVDLESCRLRLDPELDRHRYERKISFAGVLDENEDSKDSLHSSSHTIKSDAGAEEKKVPSRKIRIGGSRLLQIKGTRSFQVKKGGSLSSIRRVGSLKSSKLSRQDSESEAEELQLSQSRDTVTDLEGSPWSASEPSIEPEGLSNAGTEENYHRNMSWLHVMILLCNQQSFICTHVDYCHPHCYLHHSRSCARLVRAIKLLYGDSVDSLRESNHISNVALRGKKQKECSDKSCLRTPSLKKRVSDVNLEGKKDSGMLKYIRFQVMSLSPAPLSLLIKAAPILTEEMYGDIQPAAWELLLSMDEHMAGAAAAMFLLCAVKVPDAVSDMLMSEFHHAETVQRLNAVLKFHTLWRFRYQVWPRMEEGAQQIFKIPPPSINFTLPSPVLGMPSVPMFDPPWVPQCSGSVQDPINEDQSKSFSARAVSRSHQRAEHILKNLQQEEEKKRLGREASLITAIPITQEACYEPTCTPNSEPEEEEEVANLTSRRLSVSPSCTSSTSHRNYSFRRGSVWSVRSAVSAEDEEHATEHTPNHHVPQPPQAVFPACICAAVLPIVHLMEDGEVREDGVAVSAVAQQVLWNCLIEDPSTVLRHFLEKLTISNRQDELMYMLRKLLLNIGDFPAQTSHILFNYLVGLIMYFVRTPCEWGMDAISATLTFLWEVVGYVEGLFFKDLKQTMKKEQCEVKLLVTASMPGTKTLVVHGQNECDIPTQLPVHEDTQFEALLKECLEFFNIPESQSTHYFLMDKRWNLIHYNKTYVRDIYPFRRSVSPQLNLVHMHPEKGQELIQKQVFTRKLEEVGRVLFLISLTQKIPTAHKQSHVSMLQEDLLRLPSFPRSAIDAEFSLFSDPQAGKELFGLDTLQKSLWIQLLEEMFLGMPSEFPWGDEIMLFLNVFNGALILHPEDSALLRQYAATVINTAVHFNHLFSLSGYQWILPTMLQVYSDYESNPQLRRAIEFACHQFYILHRKPFVLQLFASVAPLLEFPDAANTGSSKGVSAQCLFDLLQSLEGETTDILDILELVKAEKPLKSLDFCYGNEDLTFSISEAIKLCVTVVAYAPESFRSLQMLMVLEALVPCYLQKMKRQTSQVETVPAAREEIAATAALATSLQALLYSVEVLTRPMTAPQMSRSDQGHKGTTTANHTMSSGVNTRYPEQGAKLHFIRENLHLLEEGQGLPREELDERISREEFRRPRESLLNICTEFYKHCGPRLKILQNLAGEPRVTALELLDVKSHMRLAEIAHSLLKLAPYDTQTMESRGLRRYIMEMLPITDWSAEAVRPALILILKRLDRMFNKIHKMPTLRRQVEWEPASSLIEGVCLTLQRQPIISFLPHLRSLINVCVNLVMGVVGPSSVADGLPLLHLSPYLSPPLPFSTAVVRLVALQIQALKEDFPLSHVISPFTNQERREGMLLNLLIPFVLTVGSGSKDSPWLEQPEVQLLLQTVINVLLPPRIISTSRSKNFMLESSPAHCSTPGDAGKDLRKEGLAESTSQAAYLALKVILVCFERQLGSQWYWLSLQVKEMALRKVGGLALWDFLDFIVRTRIPIFVLLRPFIQCKLLAQPAENHEELSARQHISDQLERRFIPRPLCKSSLIAEFNSELKILKEAVHSGSAYQGKTSISTVGTSTSAYRLSLATMSRSNTGTGTVWEQDSEPSQQASQDTLSRTDEEDEENDSVSMPSVVSEQEACLLSTIGRRRFSSHVSSMSAPQAEVGMLPSQSEPNVLDDSQGLAAEGSLSRVASIQSEPGQQNVLLQQPLGRKRGLRQLRRPLLSRQKTQTEPRNRHGARLSTTRRSIQPKTKPSVDQKRSVTFIEAQPEPTAAPTDIFPATGQPQSCSPGRARKPEGTEKPVLTSSPAIIIADLHSLSPKQSEPLLAEEGEKKEDEEIQGATAHCPLSTQLSDPDDFTGLETSSLLQHGDTVLHISEENGTENPLLSSQFTFTPPELGDTDSALDESHV</sequence>
<keyword id="KW-0002">3D-structure</keyword>
<keyword id="KW-0025">Alternative splicing</keyword>
<keyword id="KW-1003">Cell membrane</keyword>
<keyword id="KW-0966">Cell projection</keyword>
<keyword id="KW-0472">Membrane</keyword>
<keyword id="KW-0597">Phosphoprotein</keyword>
<keyword id="KW-1185">Reference proteome</keyword>
<keyword id="KW-0812">Transmembrane</keyword>
<keyword id="KW-1133">Transmembrane helix</keyword>
<gene>
    <name type="primary">Unc80</name>
    <name type="synonym">Kiaa1843</name>
</gene>
<dbReference type="EMBL" id="AK043914">
    <property type="protein sequence ID" value="BAC31702.1"/>
    <property type="molecule type" value="mRNA"/>
</dbReference>
<dbReference type="EMBL" id="AK081235">
    <property type="protein sequence ID" value="BAC38173.1"/>
    <property type="molecule type" value="mRNA"/>
</dbReference>
<dbReference type="EMBL" id="AK044008">
    <property type="protein sequence ID" value="BAC31737.1"/>
    <property type="status" value="ALT_FRAME"/>
    <property type="molecule type" value="mRNA"/>
</dbReference>
<dbReference type="EMBL" id="FJ210934">
    <property type="protein sequence ID" value="ACL00843.1"/>
    <property type="molecule type" value="mRNA"/>
</dbReference>
<dbReference type="EMBL" id="GL456084">
    <property type="status" value="NOT_ANNOTATED_CDS"/>
    <property type="molecule type" value="Genomic_DNA"/>
</dbReference>
<dbReference type="EMBL" id="AK173273">
    <property type="protein sequence ID" value="BAD32551.1"/>
    <property type="molecule type" value="mRNA"/>
</dbReference>
<dbReference type="CCDS" id="CCDS48283.1">
    <molecule id="Q8BLN6-1"/>
</dbReference>
<dbReference type="RefSeq" id="NP_780719.2">
    <molecule id="Q8BLN6-1"/>
    <property type="nucleotide sequence ID" value="NM_175510.4"/>
</dbReference>
<dbReference type="PDB" id="7W7G">
    <property type="method" value="EM"/>
    <property type="resolution" value="3.20 A"/>
    <property type="chains" value="B=1-3326"/>
</dbReference>
<dbReference type="PDBsum" id="7W7G"/>
<dbReference type="EMDB" id="EMD-32344"/>
<dbReference type="SMR" id="Q8BLN6"/>
<dbReference type="BioGRID" id="236722">
    <property type="interactions" value="1"/>
</dbReference>
<dbReference type="DIP" id="DIP-59732N"/>
<dbReference type="FunCoup" id="Q8BLN6">
    <property type="interactions" value="428"/>
</dbReference>
<dbReference type="IntAct" id="Q8BLN6">
    <property type="interactions" value="1"/>
</dbReference>
<dbReference type="STRING" id="10090.ENSMUSP00000053692"/>
<dbReference type="GlyGen" id="Q8BLN6">
    <property type="glycosylation" value="2 sites, 1 N-linked glycan (1 site), 1 O-linked glycan (1 site)"/>
</dbReference>
<dbReference type="iPTMnet" id="Q8BLN6"/>
<dbReference type="PhosphoSitePlus" id="Q8BLN6"/>
<dbReference type="PaxDb" id="10090-ENSMUSP00000053692"/>
<dbReference type="ProteomicsDB" id="300095">
    <molecule id="Q8BLN6-1"/>
</dbReference>
<dbReference type="ProteomicsDB" id="300096">
    <molecule id="Q8BLN6-2"/>
</dbReference>
<dbReference type="ProteomicsDB" id="342893"/>
<dbReference type="Antibodypedia" id="52283">
    <property type="antibodies" value="63 antibodies from 10 providers"/>
</dbReference>
<dbReference type="Ensembl" id="ENSMUST00000061620.17">
    <molecule id="Q8BLN6-1"/>
    <property type="protein sequence ID" value="ENSMUSP00000053692.10"/>
    <property type="gene ID" value="ENSMUSG00000055567.19"/>
</dbReference>
<dbReference type="GeneID" id="329178"/>
<dbReference type="KEGG" id="mmu:329178"/>
<dbReference type="UCSC" id="uc007bif.2">
    <molecule id="Q8BLN6-2"/>
    <property type="organism name" value="mouse"/>
</dbReference>
<dbReference type="UCSC" id="uc007bih.2">
    <property type="organism name" value="mouse"/>
</dbReference>
<dbReference type="AGR" id="MGI:2652882"/>
<dbReference type="CTD" id="285175"/>
<dbReference type="MGI" id="MGI:2652882">
    <property type="gene designation" value="Unc80"/>
</dbReference>
<dbReference type="VEuPathDB" id="HostDB:ENSMUSG00000055567"/>
<dbReference type="eggNOG" id="ENOG502QSTP">
    <property type="taxonomic scope" value="Eukaryota"/>
</dbReference>
<dbReference type="GeneTree" id="ENSGT00640000091496"/>
<dbReference type="HOGENOM" id="CLU_000495_1_0_1"/>
<dbReference type="InParanoid" id="Q8BLN6"/>
<dbReference type="OMA" id="GIVNWFR"/>
<dbReference type="OrthoDB" id="5584001at2759"/>
<dbReference type="TreeFam" id="TF313531"/>
<dbReference type="Reactome" id="R-MMU-2672351">
    <property type="pathway name" value="Stimuli-sensing channels"/>
</dbReference>
<dbReference type="BioGRID-ORCS" id="329178">
    <property type="hits" value="4 hits in 77 CRISPR screens"/>
</dbReference>
<dbReference type="PRO" id="PR:Q8BLN6"/>
<dbReference type="Proteomes" id="UP000000589">
    <property type="component" value="Chromosome 1"/>
</dbReference>
<dbReference type="RNAct" id="Q8BLN6">
    <property type="molecule type" value="protein"/>
</dbReference>
<dbReference type="Bgee" id="ENSMUSG00000055567">
    <property type="expression patterns" value="Expressed in superior colliculus and 90 other cell types or tissues"/>
</dbReference>
<dbReference type="GO" id="GO:0030425">
    <property type="term" value="C:dendrite"/>
    <property type="evidence" value="ECO:0007669"/>
    <property type="project" value="UniProtKB-SubCell"/>
</dbReference>
<dbReference type="GO" id="GO:0005886">
    <property type="term" value="C:plasma membrane"/>
    <property type="evidence" value="ECO:0000250"/>
    <property type="project" value="UniProtKB"/>
</dbReference>
<dbReference type="GO" id="GO:0034706">
    <property type="term" value="C:sodium channel complex"/>
    <property type="evidence" value="ECO:0000314"/>
    <property type="project" value="UniProtKB"/>
</dbReference>
<dbReference type="InterPro" id="IPR046460">
    <property type="entry name" value="UNC80_C"/>
</dbReference>
<dbReference type="InterPro" id="IPR045852">
    <property type="entry name" value="UNC80_central"/>
</dbReference>
<dbReference type="InterPro" id="IPR031542">
    <property type="entry name" value="UNC80_N"/>
</dbReference>
<dbReference type="PANTHER" id="PTHR31781:SF1">
    <property type="entry name" value="PROTEIN UNC-80 HOMOLOG"/>
    <property type="match status" value="1"/>
</dbReference>
<dbReference type="PANTHER" id="PTHR31781">
    <property type="entry name" value="UNC80"/>
    <property type="match status" value="1"/>
</dbReference>
<dbReference type="Pfam" id="PF19424">
    <property type="entry name" value="UNC80"/>
    <property type="match status" value="1"/>
</dbReference>
<dbReference type="Pfam" id="PF20262">
    <property type="entry name" value="UNC80_C"/>
    <property type="match status" value="1"/>
</dbReference>
<dbReference type="Pfam" id="PF15778">
    <property type="entry name" value="UNC80_N"/>
    <property type="match status" value="1"/>
</dbReference>
<evidence type="ECO:0000250" key="1">
    <source>
        <dbReference type="UniProtKB" id="Q8N2C7"/>
    </source>
</evidence>
<evidence type="ECO:0000255" key="2"/>
<evidence type="ECO:0000256" key="3">
    <source>
        <dbReference type="SAM" id="MobiDB-lite"/>
    </source>
</evidence>
<evidence type="ECO:0000269" key="4">
    <source>
    </source>
</evidence>
<evidence type="ECO:0000269" key="5">
    <source>
    </source>
</evidence>
<evidence type="ECO:0000269" key="6">
    <source>
    </source>
</evidence>
<evidence type="ECO:0000269" key="7">
    <source>
    </source>
</evidence>
<evidence type="ECO:0000269" key="8">
    <source>
    </source>
</evidence>
<evidence type="ECO:0000303" key="9">
    <source>
    </source>
</evidence>
<evidence type="ECO:0000305" key="10"/>
<evidence type="ECO:0007744" key="11">
    <source>
    </source>
</evidence>
<evidence type="ECO:0007829" key="12">
    <source>
        <dbReference type="PDB" id="7W7G"/>
    </source>
</evidence>
<proteinExistence type="evidence at protein level"/>
<reference key="1">
    <citation type="journal article" date="2005" name="Science">
        <title>The transcriptional landscape of the mammalian genome.</title>
        <authorList>
            <person name="Carninci P."/>
            <person name="Kasukawa T."/>
            <person name="Katayama S."/>
            <person name="Gough J."/>
            <person name="Frith M.C."/>
            <person name="Maeda N."/>
            <person name="Oyama R."/>
            <person name="Ravasi T."/>
            <person name="Lenhard B."/>
            <person name="Wells C."/>
            <person name="Kodzius R."/>
            <person name="Shimokawa K."/>
            <person name="Bajic V.B."/>
            <person name="Brenner S.E."/>
            <person name="Batalov S."/>
            <person name="Forrest A.R."/>
            <person name="Zavolan M."/>
            <person name="Davis M.J."/>
            <person name="Wilming L.G."/>
            <person name="Aidinis V."/>
            <person name="Allen J.E."/>
            <person name="Ambesi-Impiombato A."/>
            <person name="Apweiler R."/>
            <person name="Aturaliya R.N."/>
            <person name="Bailey T.L."/>
            <person name="Bansal M."/>
            <person name="Baxter L."/>
            <person name="Beisel K.W."/>
            <person name="Bersano T."/>
            <person name="Bono H."/>
            <person name="Chalk A.M."/>
            <person name="Chiu K.P."/>
            <person name="Choudhary V."/>
            <person name="Christoffels A."/>
            <person name="Clutterbuck D.R."/>
            <person name="Crowe M.L."/>
            <person name="Dalla E."/>
            <person name="Dalrymple B.P."/>
            <person name="de Bono B."/>
            <person name="Della Gatta G."/>
            <person name="di Bernardo D."/>
            <person name="Down T."/>
            <person name="Engstrom P."/>
            <person name="Fagiolini M."/>
            <person name="Faulkner G."/>
            <person name="Fletcher C.F."/>
            <person name="Fukushima T."/>
            <person name="Furuno M."/>
            <person name="Futaki S."/>
            <person name="Gariboldi M."/>
            <person name="Georgii-Hemming P."/>
            <person name="Gingeras T.R."/>
            <person name="Gojobori T."/>
            <person name="Green R.E."/>
            <person name="Gustincich S."/>
            <person name="Harbers M."/>
            <person name="Hayashi Y."/>
            <person name="Hensch T.K."/>
            <person name="Hirokawa N."/>
            <person name="Hill D."/>
            <person name="Huminiecki L."/>
            <person name="Iacono M."/>
            <person name="Ikeo K."/>
            <person name="Iwama A."/>
            <person name="Ishikawa T."/>
            <person name="Jakt M."/>
            <person name="Kanapin A."/>
            <person name="Katoh M."/>
            <person name="Kawasawa Y."/>
            <person name="Kelso J."/>
            <person name="Kitamura H."/>
            <person name="Kitano H."/>
            <person name="Kollias G."/>
            <person name="Krishnan S.P."/>
            <person name="Kruger A."/>
            <person name="Kummerfeld S.K."/>
            <person name="Kurochkin I.V."/>
            <person name="Lareau L.F."/>
            <person name="Lazarevic D."/>
            <person name="Lipovich L."/>
            <person name="Liu J."/>
            <person name="Liuni S."/>
            <person name="McWilliam S."/>
            <person name="Madan Babu M."/>
            <person name="Madera M."/>
            <person name="Marchionni L."/>
            <person name="Matsuda H."/>
            <person name="Matsuzawa S."/>
            <person name="Miki H."/>
            <person name="Mignone F."/>
            <person name="Miyake S."/>
            <person name="Morris K."/>
            <person name="Mottagui-Tabar S."/>
            <person name="Mulder N."/>
            <person name="Nakano N."/>
            <person name="Nakauchi H."/>
            <person name="Ng P."/>
            <person name="Nilsson R."/>
            <person name="Nishiguchi S."/>
            <person name="Nishikawa S."/>
            <person name="Nori F."/>
            <person name="Ohara O."/>
            <person name="Okazaki Y."/>
            <person name="Orlando V."/>
            <person name="Pang K.C."/>
            <person name="Pavan W.J."/>
            <person name="Pavesi G."/>
            <person name="Pesole G."/>
            <person name="Petrovsky N."/>
            <person name="Piazza S."/>
            <person name="Reed J."/>
            <person name="Reid J.F."/>
            <person name="Ring B.Z."/>
            <person name="Ringwald M."/>
            <person name="Rost B."/>
            <person name="Ruan Y."/>
            <person name="Salzberg S.L."/>
            <person name="Sandelin A."/>
            <person name="Schneider C."/>
            <person name="Schoenbach C."/>
            <person name="Sekiguchi K."/>
            <person name="Semple C.A."/>
            <person name="Seno S."/>
            <person name="Sessa L."/>
            <person name="Sheng Y."/>
            <person name="Shibata Y."/>
            <person name="Shimada H."/>
            <person name="Shimada K."/>
            <person name="Silva D."/>
            <person name="Sinclair B."/>
            <person name="Sperling S."/>
            <person name="Stupka E."/>
            <person name="Sugiura K."/>
            <person name="Sultana R."/>
            <person name="Takenaka Y."/>
            <person name="Taki K."/>
            <person name="Tammoja K."/>
            <person name="Tan S.L."/>
            <person name="Tang S."/>
            <person name="Taylor M.S."/>
            <person name="Tegner J."/>
            <person name="Teichmann S.A."/>
            <person name="Ueda H.R."/>
            <person name="van Nimwegen E."/>
            <person name="Verardo R."/>
            <person name="Wei C.L."/>
            <person name="Yagi K."/>
            <person name="Yamanishi H."/>
            <person name="Zabarovsky E."/>
            <person name="Zhu S."/>
            <person name="Zimmer A."/>
            <person name="Hide W."/>
            <person name="Bult C."/>
            <person name="Grimmond S.M."/>
            <person name="Teasdale R.D."/>
            <person name="Liu E.T."/>
            <person name="Brusic V."/>
            <person name="Quackenbush J."/>
            <person name="Wahlestedt C."/>
            <person name="Mattick J.S."/>
            <person name="Hume D.A."/>
            <person name="Kai C."/>
            <person name="Sasaki D."/>
            <person name="Tomaru Y."/>
            <person name="Fukuda S."/>
            <person name="Kanamori-Katayama M."/>
            <person name="Suzuki M."/>
            <person name="Aoki J."/>
            <person name="Arakawa T."/>
            <person name="Iida J."/>
            <person name="Imamura K."/>
            <person name="Itoh M."/>
            <person name="Kato T."/>
            <person name="Kawaji H."/>
            <person name="Kawagashira N."/>
            <person name="Kawashima T."/>
            <person name="Kojima M."/>
            <person name="Kondo S."/>
            <person name="Konno H."/>
            <person name="Nakano K."/>
            <person name="Ninomiya N."/>
            <person name="Nishio T."/>
            <person name="Okada M."/>
            <person name="Plessy C."/>
            <person name="Shibata K."/>
            <person name="Shiraki T."/>
            <person name="Suzuki S."/>
            <person name="Tagami M."/>
            <person name="Waki K."/>
            <person name="Watahiki A."/>
            <person name="Okamura-Oho Y."/>
            <person name="Suzuki H."/>
            <person name="Kawai J."/>
            <person name="Hayashizaki Y."/>
        </authorList>
    </citation>
    <scope>NUCLEOTIDE SEQUENCE [LARGE SCALE MRNA] (ISOFORM 2)</scope>
    <scope>NUCLEOTIDE SEQUENCE [LARGE SCALE MRNA] OF 1-700</scope>
    <source>
        <strain>C57BL/6J</strain>
        <tissue>Brain cortex</tissue>
    </source>
</reference>
<reference key="2">
    <citation type="journal article" date="2009" name="Nature">
        <title>Peptide neurotransmitters activate a cation channel complex of NALCN and UNC-80.</title>
        <authorList>
            <person name="Lu B."/>
            <person name="Su Y."/>
            <person name="Das S."/>
            <person name="Wang H."/>
            <person name="Wang Y."/>
            <person name="Liu J."/>
            <person name="Ren D."/>
        </authorList>
    </citation>
    <scope>NUCLEOTIDE SEQUENCE [MRNA] (ISOFORM 1)</scope>
    <scope>FUNCTION</scope>
    <scope>INTERACTION WITH NALCN AND UNC79</scope>
    <scope>PHOSPHORYLATION</scope>
    <scope>TISSUE SPECIFICITY</scope>
</reference>
<reference key="3">
    <citation type="journal article" date="2009" name="PLoS Biol.">
        <title>Lineage-specific biology revealed by a finished genome assembly of the mouse.</title>
        <authorList>
            <person name="Church D.M."/>
            <person name="Goodstadt L."/>
            <person name="Hillier L.W."/>
            <person name="Zody M.C."/>
            <person name="Goldstein S."/>
            <person name="She X."/>
            <person name="Bult C.J."/>
            <person name="Agarwala R."/>
            <person name="Cherry J.L."/>
            <person name="DiCuccio M."/>
            <person name="Hlavina W."/>
            <person name="Kapustin Y."/>
            <person name="Meric P."/>
            <person name="Maglott D."/>
            <person name="Birtle Z."/>
            <person name="Marques A.C."/>
            <person name="Graves T."/>
            <person name="Zhou S."/>
            <person name="Teague B."/>
            <person name="Potamousis K."/>
            <person name="Churas C."/>
            <person name="Place M."/>
            <person name="Herschleb J."/>
            <person name="Runnheim R."/>
            <person name="Forrest D."/>
            <person name="Amos-Landgraf J."/>
            <person name="Schwartz D.C."/>
            <person name="Cheng Z."/>
            <person name="Lindblad-Toh K."/>
            <person name="Eichler E.E."/>
            <person name="Ponting C.P."/>
        </authorList>
    </citation>
    <scope>NUCLEOTIDE SEQUENCE [LARGE SCALE GENOMIC DNA]</scope>
    <source>
        <strain>C57BL/6J</strain>
    </source>
</reference>
<reference key="4">
    <citation type="journal article" date="2004" name="DNA Res.">
        <title>Prediction of the coding sequences of mouse homologues of KIAA gene: IV. The complete nucleotide sequences of 500 mouse KIAA-homologous cDNAs identified by screening of terminal sequences of cDNA clones randomly sampled from size-fractionated libraries.</title>
        <authorList>
            <person name="Okazaki N."/>
            <person name="Kikuno R."/>
            <person name="Ohara R."/>
            <person name="Inamoto S."/>
            <person name="Koseki H."/>
            <person name="Hiraoka S."/>
            <person name="Saga Y."/>
            <person name="Seino S."/>
            <person name="Nishimura M."/>
            <person name="Kaisho T."/>
            <person name="Hoshino K."/>
            <person name="Kitamura H."/>
            <person name="Nagase T."/>
            <person name="Ohara O."/>
            <person name="Koga H."/>
        </authorList>
    </citation>
    <scope>NUCLEOTIDE SEQUENCE [LARGE SCALE MRNA] OF 1848-3326</scope>
    <source>
        <tissue>Brain</tissue>
    </source>
</reference>
<reference key="5">
    <citation type="journal article" date="2010" name="Cell">
        <title>A tissue-specific atlas of mouse protein phosphorylation and expression.</title>
        <authorList>
            <person name="Huttlin E.L."/>
            <person name="Jedrychowski M.P."/>
            <person name="Elias J.E."/>
            <person name="Goswami T."/>
            <person name="Rad R."/>
            <person name="Beausoleil S.A."/>
            <person name="Villen J."/>
            <person name="Haas W."/>
            <person name="Sowa M.E."/>
            <person name="Gygi S.P."/>
        </authorList>
    </citation>
    <scope>PHOSPHORYLATION [LARGE SCALE ANALYSIS] AT SER-257; SER-526 AND SER-3110</scope>
    <scope>IDENTIFICATION BY MASS SPECTROMETRY [LARGE SCALE ANALYSIS]</scope>
    <source>
        <tissue>Brain</tissue>
    </source>
</reference>
<reference key="6">
    <citation type="journal article" date="2010" name="Neuron">
        <title>Extracellular calcium controls background current and neuronal excitability via an UNC79-UNC80-NALCN cation channel complex.</title>
        <authorList>
            <person name="Lu B."/>
            <person name="Zhang Q."/>
            <person name="Wang H."/>
            <person name="Wang Y."/>
            <person name="Nakayama M."/>
            <person name="Ren D."/>
        </authorList>
    </citation>
    <scope>FUNCTION</scope>
    <scope>INTERACTION WITH NALCN AND UNC79</scope>
</reference>
<reference key="7">
    <citation type="journal article" date="2016" name="Am. J. Hum. Genet.">
        <title>Biallelic mutations in UNC80 cause persistent hypotonia, encephalopathy, growth retardation, and severe intellectual disability.</title>
        <authorList>
            <consortium name="Care4Rare Canada Consortium"/>
            <consortium name="Baylor-Hopkins Center for Mendelian Genomics"/>
            <person name="Stray-Pedersen A."/>
            <person name="Cobben J.M."/>
            <person name="Prescott T.E."/>
            <person name="Lee S."/>
            <person name="Cang C."/>
            <person name="Aranda K."/>
            <person name="Ahmed S."/>
            <person name="Alders M."/>
            <person name="Gerstner T."/>
            <person name="Aslaksen K."/>
            <person name="Tetreault M."/>
            <person name="Qin W."/>
            <person name="Hartley T."/>
            <person name="Jhangiani S.N."/>
            <person name="Muzny D.M."/>
            <person name="Tarailo-Graovac M."/>
            <person name="van Karnebeek C.D."/>
            <person name="Lupski J.R."/>
            <person name="Ren D."/>
            <person name="Yoon G."/>
        </authorList>
    </citation>
    <scope>MUTAGENESIS OF PRO-1835</scope>
    <scope>FUNCTION</scope>
    <scope>INTERACTION WITH NALCN AND UNC79</scope>
</reference>
<reference key="8">
    <citation type="journal article" date="2016" name="Am. J. Hum. Genet.">
        <title>Mutations in UNC80, encoding part of the UNC79-UNC80-NALCN channel complex, cause autosomal-recessive severe infantile encephalopathy.</title>
        <authorList>
            <person name="Shamseldin H.E."/>
            <person name="Faqeih E."/>
            <person name="Alasmari A."/>
            <person name="Zaki M.S."/>
            <person name="Gleeson J.G."/>
            <person name="Alkuraya F.S."/>
        </authorList>
    </citation>
    <scope>TISSUE SPECIFICITY</scope>
</reference>
<reference key="9">
    <citation type="journal article" date="2020" name="Nat. Commun.">
        <title>Intellectual disability-associated UNC80 mutations reveal inter-subunit interaction and dendritic function of the NALCN channel complex.</title>
        <authorList>
            <consortium name="C4RCD Research Group"/>
            <person name="Wie J."/>
            <person name="Bharthur A."/>
            <person name="Wolfgang M."/>
            <person name="Narayanan V."/>
            <person name="Ramsey K."/>
            <person name="Aranda K."/>
            <person name="Zhang Q."/>
            <person name="Zhou Y."/>
            <person name="Ren D."/>
        </authorList>
    </citation>
    <scope>FUNCTION</scope>
    <scope>SUBUNIT</scope>
    <scope>SUBCELLULAR LOCATION</scope>
    <scope>DISRUPTION PHENOTYPE</scope>
    <scope>MUTAGENESIS OF GLU-1296; 2654-LEU--VAL-3326 AND ARG-2910</scope>
    <scope>INTERACTION WITH NALCN AND UNC79</scope>
</reference>
<comment type="function">
    <text evidence="4 5 8">Auxiliary subunit of the NALCN sodium channel complex (PubMed:19092807, PubMed:21040849, PubMed:32620897). The NALCN sodium channel complex is a voltage-gated ion channel responsible for the resting Na(+) permeability that controls neuronal excitability (PubMed:32620897). This complex is activated by neuropeptides substance P, neurotensin. In addition, the channel is inhibited by extracellular Ca(2+) through the Ca(2+)-sensing receptor. UNC80 is essential for NALCN sensitivity to extracellular calcium.</text>
</comment>
<comment type="subunit">
    <text evidence="4 5 6 8">NALCN complex consists of NALCN and auxiliary subunits, UNC79, UNC80 and NACL1 (PubMed:19092807, PubMed:21040849, PubMed:26708751, PubMed:32620897). These auxiliary subunits are essential for the NALCN complex function (PubMed:32620897). Interacts (via N-terminus half) with NALCN; this interaction facilitates NALCN surface localization (PubMed:19092807, PubMed:21040849, PubMed:32620897). Interacts (via C-terminus) with UNC79 (PubMed:19092807, PubMed:21040849, PubMed:26708751, PubMed:32620897). UNC80 bridges NALCN to UNC79 (PubMed:21040849, PubMed:32620897).</text>
</comment>
<comment type="interaction">
    <interactant intactId="EBI-15747640">
        <id>Q8BLN6</id>
    </interactant>
    <interactant intactId="EBI-11570410">
        <id>Q8BXR5</id>
        <label>Nalcn</label>
    </interactant>
    <organismsDiffer>false</organismsDiffer>
    <experiments>2</experiments>
</comment>
<comment type="subcellular location">
    <subcellularLocation>
        <location evidence="1">Cell membrane</location>
        <topology evidence="2">Multi-pass membrane protein</topology>
    </subcellularLocation>
    <subcellularLocation>
        <location evidence="8">Cell projection</location>
        <location evidence="8">Dendrite</location>
    </subcellularLocation>
    <text evidence="8">In neurons, located in soma and dendrites.</text>
</comment>
<comment type="alternative products">
    <event type="alternative splicing"/>
    <isoform>
        <id>Q8BLN6-1</id>
        <name>1</name>
        <sequence type="displayed"/>
    </isoform>
    <isoform>
        <id>Q8BLN6-2</id>
        <name>2</name>
        <sequence type="described" ref="VSP_015007 VSP_015008"/>
    </isoform>
    <text>Named isoforms=2.</text>
</comment>
<comment type="tissue specificity">
    <text evidence="4 7">Expressed almost exclusively in the brain (PubMed:26708753). Expressed in hippocampus and ventral tegmental area neurons (PubMed:19092807).</text>
</comment>
<comment type="PTM">
    <text evidence="4">Phosphorylated on tyrosine residues.</text>
</comment>
<comment type="disruption phenotype">
    <text evidence="8">Knockout leads to severe apnea and neonatal lethality. No mice pups survive beyond 24 hours of birth. Hippocampal neurons show decreased NALCN-dependent sodium leak current.</text>
</comment>
<comment type="similarity">
    <text evidence="10">Belongs to the unc-80 family.</text>
</comment>
<comment type="sequence caution" evidence="10">
    <conflict type="frameshift">
        <sequence resource="EMBL-CDS" id="BAC31737"/>
    </conflict>
</comment>
<organism>
    <name type="scientific">Mus musculus</name>
    <name type="common">Mouse</name>
    <dbReference type="NCBI Taxonomy" id="10090"/>
    <lineage>
        <taxon>Eukaryota</taxon>
        <taxon>Metazoa</taxon>
        <taxon>Chordata</taxon>
        <taxon>Craniata</taxon>
        <taxon>Vertebrata</taxon>
        <taxon>Euteleostomi</taxon>
        <taxon>Mammalia</taxon>
        <taxon>Eutheria</taxon>
        <taxon>Euarchontoglires</taxon>
        <taxon>Glires</taxon>
        <taxon>Rodentia</taxon>
        <taxon>Myomorpha</taxon>
        <taxon>Muroidea</taxon>
        <taxon>Muridae</taxon>
        <taxon>Murinae</taxon>
        <taxon>Mus</taxon>
        <taxon>Mus</taxon>
    </lineage>
</organism>
<accession>Q8BLN6</accession>
<accession>B2KGE8</accession>
<accession>B2KGG4</accession>
<accession>B8XCJ6</accession>
<accession>Q69Z93</accession>
<accession>Q8BJN5</accession>
<accession>Q8BLP6</accession>